<proteinExistence type="inferred from homology"/>
<comment type="function">
    <text evidence="1">Binds directly to 16S ribosomal RNA.</text>
</comment>
<comment type="similarity">
    <text evidence="1">Belongs to the bacterial ribosomal protein bS20 family.</text>
</comment>
<protein>
    <recommendedName>
        <fullName evidence="1">Small ribosomal subunit protein bS20</fullName>
    </recommendedName>
    <alternativeName>
        <fullName evidence="3">30S ribosomal protein S20</fullName>
    </alternativeName>
</protein>
<sequence length="89" mass="10150">MANHKSAEKRARQTIKRTERNRFYRTRLKNITKAVREAVEAKDVNTANEALKLANKSIHSFVSKGFLKKQTAARRVSRLAQLVNTLKAA</sequence>
<organism>
    <name type="scientific">Campylobacter curvus (strain 525.92)</name>
    <dbReference type="NCBI Taxonomy" id="360105"/>
    <lineage>
        <taxon>Bacteria</taxon>
        <taxon>Pseudomonadati</taxon>
        <taxon>Campylobacterota</taxon>
        <taxon>Epsilonproteobacteria</taxon>
        <taxon>Campylobacterales</taxon>
        <taxon>Campylobacteraceae</taxon>
        <taxon>Campylobacter</taxon>
    </lineage>
</organism>
<name>RS20_CAMC5</name>
<accession>A7GW11</accession>
<keyword id="KW-1185">Reference proteome</keyword>
<keyword id="KW-0687">Ribonucleoprotein</keyword>
<keyword id="KW-0689">Ribosomal protein</keyword>
<keyword id="KW-0694">RNA-binding</keyword>
<keyword id="KW-0699">rRNA-binding</keyword>
<gene>
    <name evidence="1" type="primary">rpsT</name>
    <name type="ordered locus">Ccur92_00990</name>
    <name type="ORF">CCV52592_0741</name>
</gene>
<reference key="1">
    <citation type="submission" date="2007-07" db="EMBL/GenBank/DDBJ databases">
        <title>Genome sequence of Campylobacter curvus 525.92 isolated from human feces.</title>
        <authorList>
            <person name="Fouts D.E."/>
            <person name="Mongodin E.F."/>
            <person name="Puiu D."/>
            <person name="Sebastian Y."/>
            <person name="Miller W.G."/>
            <person name="Mandrell R.E."/>
            <person name="Lastovica A.J."/>
            <person name="Nelson K.E."/>
        </authorList>
    </citation>
    <scope>NUCLEOTIDE SEQUENCE [LARGE SCALE GENOMIC DNA]</scope>
    <source>
        <strain>525.92</strain>
    </source>
</reference>
<feature type="chain" id="PRO_1000014565" description="Small ribosomal subunit protein bS20">
    <location>
        <begin position="1"/>
        <end position="89"/>
    </location>
</feature>
<feature type="region of interest" description="Disordered" evidence="2">
    <location>
        <begin position="1"/>
        <end position="20"/>
    </location>
</feature>
<evidence type="ECO:0000255" key="1">
    <source>
        <dbReference type="HAMAP-Rule" id="MF_00500"/>
    </source>
</evidence>
<evidence type="ECO:0000256" key="2">
    <source>
        <dbReference type="SAM" id="MobiDB-lite"/>
    </source>
</evidence>
<evidence type="ECO:0000305" key="3"/>
<dbReference type="EMBL" id="CP000767">
    <property type="protein sequence ID" value="EAT99679.1"/>
    <property type="molecule type" value="Genomic_DNA"/>
</dbReference>
<dbReference type="RefSeq" id="WP_011991679.1">
    <property type="nucleotide sequence ID" value="NC_009715.2"/>
</dbReference>
<dbReference type="SMR" id="A7GW11"/>
<dbReference type="STRING" id="360105.CCV52592_0741"/>
<dbReference type="KEGG" id="ccv:CCV52592_0741"/>
<dbReference type="HOGENOM" id="CLU_160655_3_0_7"/>
<dbReference type="OrthoDB" id="9807974at2"/>
<dbReference type="Proteomes" id="UP000006380">
    <property type="component" value="Chromosome"/>
</dbReference>
<dbReference type="GO" id="GO:0005829">
    <property type="term" value="C:cytosol"/>
    <property type="evidence" value="ECO:0007669"/>
    <property type="project" value="TreeGrafter"/>
</dbReference>
<dbReference type="GO" id="GO:0015935">
    <property type="term" value="C:small ribosomal subunit"/>
    <property type="evidence" value="ECO:0007669"/>
    <property type="project" value="TreeGrafter"/>
</dbReference>
<dbReference type="GO" id="GO:0070181">
    <property type="term" value="F:small ribosomal subunit rRNA binding"/>
    <property type="evidence" value="ECO:0007669"/>
    <property type="project" value="TreeGrafter"/>
</dbReference>
<dbReference type="GO" id="GO:0003735">
    <property type="term" value="F:structural constituent of ribosome"/>
    <property type="evidence" value="ECO:0007669"/>
    <property type="project" value="InterPro"/>
</dbReference>
<dbReference type="GO" id="GO:0006412">
    <property type="term" value="P:translation"/>
    <property type="evidence" value="ECO:0007669"/>
    <property type="project" value="UniProtKB-UniRule"/>
</dbReference>
<dbReference type="FunFam" id="1.20.58.110:FF:000001">
    <property type="entry name" value="30S ribosomal protein S20"/>
    <property type="match status" value="1"/>
</dbReference>
<dbReference type="Gene3D" id="1.20.58.110">
    <property type="entry name" value="Ribosomal protein S20"/>
    <property type="match status" value="1"/>
</dbReference>
<dbReference type="HAMAP" id="MF_00500">
    <property type="entry name" value="Ribosomal_bS20"/>
    <property type="match status" value="1"/>
</dbReference>
<dbReference type="InterPro" id="IPR002583">
    <property type="entry name" value="Ribosomal_bS20"/>
</dbReference>
<dbReference type="InterPro" id="IPR036510">
    <property type="entry name" value="Ribosomal_bS20_sf"/>
</dbReference>
<dbReference type="NCBIfam" id="TIGR00029">
    <property type="entry name" value="S20"/>
    <property type="match status" value="1"/>
</dbReference>
<dbReference type="PANTHER" id="PTHR33398">
    <property type="entry name" value="30S RIBOSOMAL PROTEIN S20"/>
    <property type="match status" value="1"/>
</dbReference>
<dbReference type="PANTHER" id="PTHR33398:SF1">
    <property type="entry name" value="SMALL RIBOSOMAL SUBUNIT PROTEIN BS20C"/>
    <property type="match status" value="1"/>
</dbReference>
<dbReference type="Pfam" id="PF01649">
    <property type="entry name" value="Ribosomal_S20p"/>
    <property type="match status" value="1"/>
</dbReference>
<dbReference type="SUPFAM" id="SSF46992">
    <property type="entry name" value="Ribosomal protein S20"/>
    <property type="match status" value="1"/>
</dbReference>